<comment type="subcellular location">
    <subcellularLocation>
        <location>Plastid</location>
        <location>Chloroplast</location>
    </subcellularLocation>
</comment>
<comment type="alternative products">
    <event type="alternative splicing"/>
    <isoform>
        <id>P30397-1</id>
        <name>1</name>
        <sequence type="displayed"/>
    </isoform>
    <isoform>
        <id>P30397-2</id>
        <name>2</name>
        <sequence type="described" ref="VSP_009646"/>
    </isoform>
    <text>Isoform 1 is the more common.</text>
</comment>
<comment type="miscellaneous">
    <text>The protein migrates at 80 kDa in SDS-PAGE gels.</text>
</comment>
<comment type="similarity">
    <text evidence="1">Belongs to the roaA family.</text>
</comment>
<protein>
    <recommendedName>
        <fullName>Ribosomal operon-associated A protein</fullName>
        <shortName>RoaA</shortName>
    </recommendedName>
</protein>
<evidence type="ECO:0000305" key="1"/>
<accession>P30397</accession>
<accession>Q95AL4</accession>
<name>ROAA_EUGGR</name>
<organism>
    <name type="scientific">Euglena gracilis</name>
    <dbReference type="NCBI Taxonomy" id="3039"/>
    <lineage>
        <taxon>Eukaryota</taxon>
        <taxon>Discoba</taxon>
        <taxon>Euglenozoa</taxon>
        <taxon>Euglenida</taxon>
        <taxon>Spirocuta</taxon>
        <taxon>Euglenophyceae</taxon>
        <taxon>Euglenales</taxon>
        <taxon>Euglenaceae</taxon>
        <taxon>Euglena</taxon>
    </lineage>
</organism>
<keyword id="KW-0025">Alternative splicing</keyword>
<keyword id="KW-0150">Chloroplast</keyword>
<keyword id="KW-0934">Plastid</keyword>
<proteinExistence type="inferred from homology"/>
<sequence length="516" mass="64334">MFSFFYRFNWNFIKWNLVDNTVSLTQHKIYLASKKSDIFLVKNKQRRFFKSFYAHIFSVRNCFEKFPSLQSYFYSSKDKFFLVSLLSSKRNLFLHGFFYNIKKAFLFYSYDFFLLYKLSFSLLLTSTLLPYINDINPCFIKDYYFFVEGNFFDFEQILIDVFKYSYYFKVENFKFLYFARFSWIYKNFPLDVNFLKNFLDRKNLVFFKSLFLIIFNFIFNGLNFFFQENFFISYKVYYLFYIDKFYFFFKFPYDFFICKKIIISFFSLRGIILNININSFYRFETFVFNFFIFDFLRFGSNILLHINKKHIQFYKLSLKMIVKMFLKKSVFFLVNLLNKKILDCLNRGFFCFNNNFLFLELDLYLYRLLWRYIKKLHSRKTRTWIYSKYWKFFSGIWRFFITDIKTGNFLFLKSHLYSSKYFYSYRNMKFKISNTLNIFNLYNKGKLERMIFEKFKYKFSPNFIVLYNNQRGLCFFCKKSIYSNRFVILNIKKWNFSFFENLILIHFYCNNFNQLQ</sequence>
<dbReference type="EMBL" id="X70810">
    <property type="protein sequence ID" value="CAA50104.1"/>
    <property type="molecule type" value="Genomic_DNA"/>
</dbReference>
<dbReference type="EMBL" id="X70810">
    <property type="protein sequence ID" value="CAC69147.1"/>
    <property type="molecule type" value="Genomic_DNA"/>
</dbReference>
<dbReference type="EMBL" id="Z11874">
    <property type="protein sequence ID" value="CAA77921.1"/>
    <property type="molecule type" value="Genomic_DNA"/>
</dbReference>
<dbReference type="PIR" id="S34892">
    <property type="entry name" value="S34525"/>
</dbReference>
<dbReference type="RefSeq" id="NP_041917.1">
    <molecule id="P30397-1"/>
    <property type="nucleotide sequence ID" value="NC_001603.2"/>
</dbReference>
<dbReference type="SMR" id="P30397"/>
<dbReference type="GO" id="GO:0009507">
    <property type="term" value="C:chloroplast"/>
    <property type="evidence" value="ECO:0007669"/>
    <property type="project" value="UniProtKB-SubCell"/>
</dbReference>
<dbReference type="InterPro" id="IPR025960">
    <property type="entry name" value="RVT_N"/>
</dbReference>
<dbReference type="Pfam" id="PF13655">
    <property type="entry name" value="RVT_N"/>
    <property type="match status" value="1"/>
</dbReference>
<gene>
    <name type="primary">roaA</name>
    <name type="synonym">ycf82</name>
</gene>
<feature type="chain" id="PRO_0000217293" description="Ribosomal operon-associated A protein">
    <location>
        <begin position="1"/>
        <end position="516"/>
    </location>
</feature>
<feature type="splice variant" id="VSP_009646" description="In isoform 2." evidence="1">
    <location>
        <begin position="17"/>
        <end position="18"/>
    </location>
</feature>
<reference key="1">
    <citation type="journal article" date="1993" name="Nucleic Acids Res.">
        <title>Complete sequence of Euglena gracilis chloroplast DNA.</title>
        <authorList>
            <person name="Hallick R.B."/>
            <person name="Hong L."/>
            <person name="Drager R.G."/>
            <person name="Favreau M.R."/>
            <person name="Monfort A."/>
            <person name="Orsat B."/>
            <person name="Spielmann A."/>
            <person name="Stutz E."/>
        </authorList>
    </citation>
    <scope>NUCLEOTIDE SEQUENCE [LARGE SCALE GENOMIC DNA]</scope>
    <source>
        <strain>Z / UTEX 753</strain>
    </source>
</reference>
<reference key="2">
    <citation type="journal article" date="1995" name="RNA">
        <title>Alternative splicing of the Euglena gracilis chloroplast roaA transcript.</title>
        <authorList>
            <person name="Jenkins K.P."/>
            <person name="Hong L."/>
            <person name="Hallick R.B."/>
        </authorList>
    </citation>
    <scope>NUCLEOTIDE SEQUENCE [GENOMIC DNA] (ISOFORMS 1 AND 2)</scope>
    <scope>DETECTION OF THE PROTEIN</scope>
    <source>
        <strain>Z / UTEX 753</strain>
    </source>
</reference>
<geneLocation type="chloroplast"/>